<dbReference type="EMBL" id="AE005674">
    <property type="protein sequence ID" value="AAN45240.1"/>
    <property type="molecule type" value="Genomic_DNA"/>
</dbReference>
<dbReference type="EMBL" id="AE014073">
    <property type="protein sequence ID" value="AAP18956.1"/>
    <property type="molecule type" value="Genomic_DNA"/>
</dbReference>
<dbReference type="RefSeq" id="NP_709533.1">
    <property type="nucleotide sequence ID" value="NC_004337.2"/>
</dbReference>
<dbReference type="RefSeq" id="WP_000805504.1">
    <property type="nucleotide sequence ID" value="NZ_WPGW01000019.1"/>
</dbReference>
<dbReference type="SMR" id="Q83IY9"/>
<dbReference type="STRING" id="198214.SF3800"/>
<dbReference type="PaxDb" id="198214-SF3800"/>
<dbReference type="GeneID" id="1026070"/>
<dbReference type="KEGG" id="sfl:SF3800"/>
<dbReference type="KEGG" id="sfx:S3968"/>
<dbReference type="PATRIC" id="fig|198214.7.peg.4485"/>
<dbReference type="HOGENOM" id="CLU_159877_2_0_6"/>
<dbReference type="Proteomes" id="UP000001006">
    <property type="component" value="Chromosome"/>
</dbReference>
<dbReference type="Proteomes" id="UP000002673">
    <property type="component" value="Chromosome"/>
</dbReference>
<dbReference type="InterPro" id="IPR048144">
    <property type="entry name" value="YicS_fam"/>
</dbReference>
<dbReference type="NCBIfam" id="NF041639">
    <property type="entry name" value="YicS_fam"/>
    <property type="match status" value="1"/>
</dbReference>
<reference key="1">
    <citation type="journal article" date="2002" name="Nucleic Acids Res.">
        <title>Genome sequence of Shigella flexneri 2a: insights into pathogenicity through comparison with genomes of Escherichia coli K12 and O157.</title>
        <authorList>
            <person name="Jin Q."/>
            <person name="Yuan Z."/>
            <person name="Xu J."/>
            <person name="Wang Y."/>
            <person name="Shen Y."/>
            <person name="Lu W."/>
            <person name="Wang J."/>
            <person name="Liu H."/>
            <person name="Yang J."/>
            <person name="Yang F."/>
            <person name="Zhang X."/>
            <person name="Zhang J."/>
            <person name="Yang G."/>
            <person name="Wu H."/>
            <person name="Qu D."/>
            <person name="Dong J."/>
            <person name="Sun L."/>
            <person name="Xue Y."/>
            <person name="Zhao A."/>
            <person name="Gao Y."/>
            <person name="Zhu J."/>
            <person name="Kan B."/>
            <person name="Ding K."/>
            <person name="Chen S."/>
            <person name="Cheng H."/>
            <person name="Yao Z."/>
            <person name="He B."/>
            <person name="Chen R."/>
            <person name="Ma D."/>
            <person name="Qiang B."/>
            <person name="Wen Y."/>
            <person name="Hou Y."/>
            <person name="Yu J."/>
        </authorList>
    </citation>
    <scope>NUCLEOTIDE SEQUENCE [LARGE SCALE GENOMIC DNA]</scope>
    <source>
        <strain>301 / Serotype 2a</strain>
    </source>
</reference>
<reference key="2">
    <citation type="journal article" date="2003" name="Infect. Immun.">
        <title>Complete genome sequence and comparative genomics of Shigella flexneri serotype 2a strain 2457T.</title>
        <authorList>
            <person name="Wei J."/>
            <person name="Goldberg M.B."/>
            <person name="Burland V."/>
            <person name="Venkatesan M.M."/>
            <person name="Deng W."/>
            <person name="Fournier G."/>
            <person name="Mayhew G.F."/>
            <person name="Plunkett G. III"/>
            <person name="Rose D.J."/>
            <person name="Darling A."/>
            <person name="Mau B."/>
            <person name="Perna N.T."/>
            <person name="Payne S.M."/>
            <person name="Runyen-Janecky L.J."/>
            <person name="Zhou S."/>
            <person name="Schwartz D.C."/>
            <person name="Blattner F.R."/>
        </authorList>
    </citation>
    <scope>NUCLEOTIDE SEQUENCE [LARGE SCALE GENOMIC DNA]</scope>
    <source>
        <strain>ATCC 700930 / 2457T / Serotype 2a</strain>
    </source>
</reference>
<protein>
    <recommendedName>
        <fullName>Uncharacterized protein YicS</fullName>
    </recommendedName>
</protein>
<gene>
    <name type="primary">yicS</name>
    <name type="ordered locus">SF3800</name>
    <name type="ordered locus">S3968</name>
</gene>
<name>YICS_SHIFL</name>
<organism>
    <name type="scientific">Shigella flexneri</name>
    <dbReference type="NCBI Taxonomy" id="623"/>
    <lineage>
        <taxon>Bacteria</taxon>
        <taxon>Pseudomonadati</taxon>
        <taxon>Pseudomonadota</taxon>
        <taxon>Gammaproteobacteria</taxon>
        <taxon>Enterobacterales</taxon>
        <taxon>Enterobacteriaceae</taxon>
        <taxon>Shigella</taxon>
    </lineage>
</organism>
<feature type="chain" id="PRO_0000262303" description="Uncharacterized protein YicS">
    <location>
        <begin position="1"/>
        <end position="97"/>
    </location>
</feature>
<sequence>MKPTTLLLIFTFFAMPGIVYAESPFSSLQSAKEKTTVLQDLRKICTPHASLSDEAWEKLMLSDENNKQHIREAIVAMERNNQSNYWEALGKVECPDM</sequence>
<proteinExistence type="predicted"/>
<accession>Q83IY9</accession>
<accession>Q7BZ93</accession>
<keyword id="KW-1185">Reference proteome</keyword>